<dbReference type="EMBL" id="DQ424856">
    <property type="protein sequence ID" value="ABE47556.1"/>
    <property type="molecule type" value="Genomic_DNA"/>
</dbReference>
<dbReference type="RefSeq" id="YP_002608387.1">
    <property type="nucleotide sequence ID" value="NC_012119.1"/>
</dbReference>
<dbReference type="RefSeq" id="YP_567098.1">
    <property type="nucleotide sequence ID" value="NC_007957.1"/>
</dbReference>
<dbReference type="SMR" id="Q0ZIZ8"/>
<dbReference type="FunCoup" id="Q0ZIZ8">
    <property type="interactions" value="1061"/>
</dbReference>
<dbReference type="STRING" id="29760.Q0ZIZ8"/>
<dbReference type="GeneID" id="4025061"/>
<dbReference type="GeneID" id="7498604"/>
<dbReference type="KEGG" id="vvi:4025061"/>
<dbReference type="KEGG" id="vvi:7498604"/>
<dbReference type="InParanoid" id="Q0ZIZ8"/>
<dbReference type="OrthoDB" id="901578at71240"/>
<dbReference type="Proteomes" id="UP000009183">
    <property type="component" value="Chloroplast"/>
</dbReference>
<dbReference type="ExpressionAtlas" id="Q0ZIZ8">
    <property type="expression patterns" value="baseline and differential"/>
</dbReference>
<dbReference type="GO" id="GO:0009507">
    <property type="term" value="C:chloroplast"/>
    <property type="evidence" value="ECO:0007669"/>
    <property type="project" value="UniProtKB-SubCell"/>
</dbReference>
<dbReference type="GO" id="GO:0005763">
    <property type="term" value="C:mitochondrial small ribosomal subunit"/>
    <property type="evidence" value="ECO:0000318"/>
    <property type="project" value="GO_Central"/>
</dbReference>
<dbReference type="GO" id="GO:0070181">
    <property type="term" value="F:small ribosomal subunit rRNA binding"/>
    <property type="evidence" value="ECO:0000318"/>
    <property type="project" value="GO_Central"/>
</dbReference>
<dbReference type="GO" id="GO:0003735">
    <property type="term" value="F:structural constituent of ribosome"/>
    <property type="evidence" value="ECO:0000318"/>
    <property type="project" value="GO_Central"/>
</dbReference>
<dbReference type="GO" id="GO:0006412">
    <property type="term" value="P:translation"/>
    <property type="evidence" value="ECO:0000318"/>
    <property type="project" value="GO_Central"/>
</dbReference>
<dbReference type="FunFam" id="4.10.640.10:FF:000002">
    <property type="entry name" value="30S ribosomal protein S18, chloroplastic"/>
    <property type="match status" value="1"/>
</dbReference>
<dbReference type="Gene3D" id="4.10.640.10">
    <property type="entry name" value="Ribosomal protein S18"/>
    <property type="match status" value="1"/>
</dbReference>
<dbReference type="HAMAP" id="MF_00270">
    <property type="entry name" value="Ribosomal_bS18"/>
    <property type="match status" value="1"/>
</dbReference>
<dbReference type="InterPro" id="IPR001648">
    <property type="entry name" value="Ribosomal_bS18"/>
</dbReference>
<dbReference type="InterPro" id="IPR018275">
    <property type="entry name" value="Ribosomal_bS18_CS"/>
</dbReference>
<dbReference type="InterPro" id="IPR036870">
    <property type="entry name" value="Ribosomal_bS18_sf"/>
</dbReference>
<dbReference type="NCBIfam" id="TIGR00165">
    <property type="entry name" value="S18"/>
    <property type="match status" value="1"/>
</dbReference>
<dbReference type="PANTHER" id="PTHR13479">
    <property type="entry name" value="30S RIBOSOMAL PROTEIN S18"/>
    <property type="match status" value="1"/>
</dbReference>
<dbReference type="PANTHER" id="PTHR13479:SF40">
    <property type="entry name" value="SMALL RIBOSOMAL SUBUNIT PROTEIN BS18M"/>
    <property type="match status" value="1"/>
</dbReference>
<dbReference type="Pfam" id="PF01084">
    <property type="entry name" value="Ribosomal_S18"/>
    <property type="match status" value="1"/>
</dbReference>
<dbReference type="PRINTS" id="PR00974">
    <property type="entry name" value="RIBOSOMALS18"/>
</dbReference>
<dbReference type="SUPFAM" id="SSF46911">
    <property type="entry name" value="Ribosomal protein S18"/>
    <property type="match status" value="1"/>
</dbReference>
<dbReference type="PROSITE" id="PS00057">
    <property type="entry name" value="RIBOSOMAL_S18"/>
    <property type="match status" value="1"/>
</dbReference>
<organism>
    <name type="scientific">Vitis vinifera</name>
    <name type="common">Grape</name>
    <dbReference type="NCBI Taxonomy" id="29760"/>
    <lineage>
        <taxon>Eukaryota</taxon>
        <taxon>Viridiplantae</taxon>
        <taxon>Streptophyta</taxon>
        <taxon>Embryophyta</taxon>
        <taxon>Tracheophyta</taxon>
        <taxon>Spermatophyta</taxon>
        <taxon>Magnoliopsida</taxon>
        <taxon>eudicotyledons</taxon>
        <taxon>Gunneridae</taxon>
        <taxon>Pentapetalae</taxon>
        <taxon>rosids</taxon>
        <taxon>Vitales</taxon>
        <taxon>Vitaceae</taxon>
        <taxon>Viteae</taxon>
        <taxon>Vitis</taxon>
    </lineage>
</organism>
<geneLocation type="chloroplast"/>
<evidence type="ECO:0000255" key="1">
    <source>
        <dbReference type="HAMAP-Rule" id="MF_00270"/>
    </source>
</evidence>
<evidence type="ECO:0000305" key="2"/>
<feature type="chain" id="PRO_0000276893" description="Small ribosomal subunit protein bS18c">
    <location>
        <begin position="1"/>
        <end position="101"/>
    </location>
</feature>
<name>RR18_VITVI</name>
<reference key="1">
    <citation type="journal article" date="2006" name="BMC Evol. Biol.">
        <title>Phylogenetic analyses of Vitis (Vitaceae) based on complete chloroplast genome sequences: effects of taxon sampling and phylogenetic methods on resolving relationships among rosids.</title>
        <authorList>
            <person name="Jansen R.K."/>
            <person name="Kaittanis C."/>
            <person name="Lee S.-B."/>
            <person name="Saski C."/>
            <person name="Tomkins J."/>
            <person name="Alverson A.J."/>
            <person name="Daniell H."/>
        </authorList>
    </citation>
    <scope>NUCLEOTIDE SEQUENCE [LARGE SCALE GENOMIC DNA]</scope>
    <source>
        <strain>cv. Maxxa</strain>
    </source>
</reference>
<keyword id="KW-0150">Chloroplast</keyword>
<keyword id="KW-0934">Plastid</keyword>
<keyword id="KW-1185">Reference proteome</keyword>
<keyword id="KW-0687">Ribonucleoprotein</keyword>
<keyword id="KW-0689">Ribosomal protein</keyword>
<keyword id="KW-0694">RNA-binding</keyword>
<keyword id="KW-0699">rRNA-binding</keyword>
<sequence length="101" mass="11990">MDKSKRPFLKSKRSFRRRLPPIQSGDRIDYRNMSLISRFISEQGKILSRRVNRLTLKQQRLITIAIKQARILSSLPFLNNEKQFERTESTARTTGLRTRNK</sequence>
<comment type="subunit">
    <text>Part of the 30S ribosomal subunit.</text>
</comment>
<comment type="subcellular location">
    <subcellularLocation>
        <location>Plastid</location>
        <location>Chloroplast</location>
    </subcellularLocation>
</comment>
<comment type="similarity">
    <text evidence="1">Belongs to the bacterial ribosomal protein bS18 family.</text>
</comment>
<proteinExistence type="inferred from homology"/>
<protein>
    <recommendedName>
        <fullName evidence="1">Small ribosomal subunit protein bS18c</fullName>
    </recommendedName>
    <alternativeName>
        <fullName evidence="2">30S ribosomal protein S18, chloroplastic</fullName>
    </alternativeName>
</protein>
<gene>
    <name evidence="1" type="primary">rps18</name>
</gene>
<accession>Q0ZIZ8</accession>